<sequence>MAASSLPSHNSKFEPKLERAQIAWSEEGVPTSTMFDDVYYSKLDGLAEVNYIFLKHNQLPERFETLLPNSRFCILETGFGAGLNFLTTCLLWLEKSPADAQLHFISLEKFPLTRSELAKAHHAFEEVSEPSNALLDVYPLHLPGWHDVFLYDQRIRLTLWFGHVMKGLPEFDVQVDAWFLDGFTPRKNPDMWQSELYLQMARLSNEATTFATFTAAGDVRRGLAQYGFEVEKAPGYAQKREMCFGRYAHSRPFSSKAPWFERAKGGHPSPKKAIVIGAGLAGATVAYQLASQGLSVTVLEQEKAVAQQASGNLAGAIHPLVTADWNVRSQFYLKGFECSLRWLRPWFDSHSIVGQQNGLMQLAMTETMLQRLQEALTRVGLPKSFAYWCDADQASDLIGQKTDHEGLFFPEAGWVQPTSVVTQCLAHEAIALKQEEAVVSIQPVPDQNSQDWQIMTPNSTYQADVVVVATGALNGDLNEQLNLPIRPVKGQVSHFKAADLKGALKTTVTHRGYSVCGDFGAQSPYAAISGATFEAPDLSPILSDASHIENQRLATEALPNWLADSTDMAGKVGFRPTTPDHLPLIGAVPDFEWMKTAYFEQSHTHAVYRYAEQRYQPGLYVSNGHGARGLMSVFLAAEMIGAMVTGDAQVMPKSLYHAVHPARFAIRHWRSGKR</sequence>
<organism>
    <name type="scientific">Hydrogenovibrio crunogenus (strain DSM 25203 / XCL-2)</name>
    <name type="common">Thiomicrospira crunogena</name>
    <dbReference type="NCBI Taxonomy" id="317025"/>
    <lineage>
        <taxon>Bacteria</taxon>
        <taxon>Pseudomonadati</taxon>
        <taxon>Pseudomonadota</taxon>
        <taxon>Gammaproteobacteria</taxon>
        <taxon>Thiotrichales</taxon>
        <taxon>Piscirickettsiaceae</taxon>
        <taxon>Hydrogenovibrio</taxon>
    </lineage>
</organism>
<reference key="1">
    <citation type="journal article" date="2006" name="PLoS Biol.">
        <title>The genome of deep-sea vent chemolithoautotroph Thiomicrospira crunogena XCL-2.</title>
        <authorList>
            <person name="Scott K.M."/>
            <person name="Sievert S.M."/>
            <person name="Abril F.N."/>
            <person name="Ball L.A."/>
            <person name="Barrett C.J."/>
            <person name="Blake R.A."/>
            <person name="Boller A.J."/>
            <person name="Chain P.S.G."/>
            <person name="Clark J.A."/>
            <person name="Davis C.R."/>
            <person name="Detter C."/>
            <person name="Do K.F."/>
            <person name="Dobrinski K.P."/>
            <person name="Faza B.I."/>
            <person name="Fitzpatrick K.A."/>
            <person name="Freyermuth S.K."/>
            <person name="Harmer T.L."/>
            <person name="Hauser L.J."/>
            <person name="Huegler M."/>
            <person name="Kerfeld C.A."/>
            <person name="Klotz M.G."/>
            <person name="Kong W.W."/>
            <person name="Land M."/>
            <person name="Lapidus A."/>
            <person name="Larimer F.W."/>
            <person name="Longo D.L."/>
            <person name="Lucas S."/>
            <person name="Malfatti S.A."/>
            <person name="Massey S.E."/>
            <person name="Martin D.D."/>
            <person name="McCuddin Z."/>
            <person name="Meyer F."/>
            <person name="Moore J.L."/>
            <person name="Ocampo L.H. Jr."/>
            <person name="Paul J.H."/>
            <person name="Paulsen I.T."/>
            <person name="Reep D.K."/>
            <person name="Ren Q."/>
            <person name="Ross R.L."/>
            <person name="Sato P.Y."/>
            <person name="Thomas P."/>
            <person name="Tinkham L.E."/>
            <person name="Zeruth G.T."/>
        </authorList>
    </citation>
    <scope>NUCLEOTIDE SEQUENCE [LARGE SCALE GENOMIC DNA]</scope>
    <source>
        <strain>DSM 25203 / XCL-2</strain>
    </source>
</reference>
<name>MNMC_HYDCU</name>
<protein>
    <recommendedName>
        <fullName evidence="1">tRNA 5-methylaminomethyl-2-thiouridine biosynthesis bifunctional protein MnmC</fullName>
        <shortName evidence="1">tRNA mnm(5)s(2)U biosynthesis bifunctional protein</shortName>
    </recommendedName>
    <domain>
        <recommendedName>
            <fullName evidence="1">tRNA (mnm(5)s(2)U34)-methyltransferase</fullName>
            <ecNumber evidence="1">2.1.1.61</ecNumber>
        </recommendedName>
    </domain>
    <domain>
        <recommendedName>
            <fullName evidence="1">FAD-dependent cmnm(5)s(2)U34 oxidoreductase</fullName>
            <ecNumber evidence="1">1.5.-.-</ecNumber>
        </recommendedName>
    </domain>
</protein>
<keyword id="KW-0963">Cytoplasm</keyword>
<keyword id="KW-0274">FAD</keyword>
<keyword id="KW-0285">Flavoprotein</keyword>
<keyword id="KW-0489">Methyltransferase</keyword>
<keyword id="KW-0511">Multifunctional enzyme</keyword>
<keyword id="KW-0560">Oxidoreductase</keyword>
<keyword id="KW-0949">S-adenosyl-L-methionine</keyword>
<keyword id="KW-0808">Transferase</keyword>
<keyword id="KW-0819">tRNA processing</keyword>
<dbReference type="EC" id="2.1.1.61" evidence="1"/>
<dbReference type="EC" id="1.5.-.-" evidence="1"/>
<dbReference type="EMBL" id="CP000109">
    <property type="protein sequence ID" value="ABB40726.1"/>
    <property type="molecule type" value="Genomic_DNA"/>
</dbReference>
<dbReference type="SMR" id="Q31JE7"/>
<dbReference type="STRING" id="317025.Tcr_0130"/>
<dbReference type="KEGG" id="tcx:Tcr_0130"/>
<dbReference type="eggNOG" id="COG0665">
    <property type="taxonomic scope" value="Bacteria"/>
</dbReference>
<dbReference type="eggNOG" id="COG4121">
    <property type="taxonomic scope" value="Bacteria"/>
</dbReference>
<dbReference type="HOGENOM" id="CLU_022427_1_0_6"/>
<dbReference type="OrthoDB" id="9786494at2"/>
<dbReference type="GO" id="GO:0005737">
    <property type="term" value="C:cytoplasm"/>
    <property type="evidence" value="ECO:0007669"/>
    <property type="project" value="UniProtKB-SubCell"/>
</dbReference>
<dbReference type="GO" id="GO:0050660">
    <property type="term" value="F:flavin adenine dinucleotide binding"/>
    <property type="evidence" value="ECO:0007669"/>
    <property type="project" value="UniProtKB-UniRule"/>
</dbReference>
<dbReference type="GO" id="GO:0016645">
    <property type="term" value="F:oxidoreductase activity, acting on the CH-NH group of donors"/>
    <property type="evidence" value="ECO:0007669"/>
    <property type="project" value="InterPro"/>
</dbReference>
<dbReference type="GO" id="GO:0004808">
    <property type="term" value="F:tRNA (5-methylaminomethyl-2-thiouridylate)(34)-methyltransferase activity"/>
    <property type="evidence" value="ECO:0007669"/>
    <property type="project" value="UniProtKB-EC"/>
</dbReference>
<dbReference type="GO" id="GO:0032259">
    <property type="term" value="P:methylation"/>
    <property type="evidence" value="ECO:0007669"/>
    <property type="project" value="UniProtKB-KW"/>
</dbReference>
<dbReference type="GO" id="GO:0002097">
    <property type="term" value="P:tRNA wobble base modification"/>
    <property type="evidence" value="ECO:0007669"/>
    <property type="project" value="UniProtKB-UniRule"/>
</dbReference>
<dbReference type="Gene3D" id="3.30.9.10">
    <property type="entry name" value="D-Amino Acid Oxidase, subunit A, domain 2"/>
    <property type="match status" value="1"/>
</dbReference>
<dbReference type="Gene3D" id="3.50.50.60">
    <property type="entry name" value="FAD/NAD(P)-binding domain"/>
    <property type="match status" value="1"/>
</dbReference>
<dbReference type="Gene3D" id="3.40.50.150">
    <property type="entry name" value="Vaccinia Virus protein VP39"/>
    <property type="match status" value="1"/>
</dbReference>
<dbReference type="HAMAP" id="MF_01102">
    <property type="entry name" value="MnmC"/>
    <property type="match status" value="1"/>
</dbReference>
<dbReference type="InterPro" id="IPR006076">
    <property type="entry name" value="FAD-dep_OxRdtase"/>
</dbReference>
<dbReference type="InterPro" id="IPR036188">
    <property type="entry name" value="FAD/NAD-bd_sf"/>
</dbReference>
<dbReference type="InterPro" id="IPR008471">
    <property type="entry name" value="MnmC-like_methylTransf"/>
</dbReference>
<dbReference type="InterPro" id="IPR029063">
    <property type="entry name" value="SAM-dependent_MTases_sf"/>
</dbReference>
<dbReference type="InterPro" id="IPR023032">
    <property type="entry name" value="tRNA_MAMT_biosynth_bifunc_MnmC"/>
</dbReference>
<dbReference type="InterPro" id="IPR047785">
    <property type="entry name" value="tRNA_MNMC2"/>
</dbReference>
<dbReference type="InterPro" id="IPR017610">
    <property type="entry name" value="tRNA_S-uridine_synth_MnmC_C"/>
</dbReference>
<dbReference type="NCBIfam" id="TIGR03197">
    <property type="entry name" value="MnmC_Cterm"/>
    <property type="match status" value="1"/>
</dbReference>
<dbReference type="NCBIfam" id="NF002481">
    <property type="entry name" value="PRK01747.1-2"/>
    <property type="match status" value="1"/>
</dbReference>
<dbReference type="NCBIfam" id="NF033855">
    <property type="entry name" value="tRNA_MNMC2"/>
    <property type="match status" value="1"/>
</dbReference>
<dbReference type="PANTHER" id="PTHR13847">
    <property type="entry name" value="SARCOSINE DEHYDROGENASE-RELATED"/>
    <property type="match status" value="1"/>
</dbReference>
<dbReference type="PANTHER" id="PTHR13847:SF283">
    <property type="entry name" value="TRNA 5-METHYLAMINOMETHYL-2-THIOURIDINE BIOSYNTHESIS BIFUNCTIONAL PROTEIN MNMC"/>
    <property type="match status" value="1"/>
</dbReference>
<dbReference type="Pfam" id="PF01266">
    <property type="entry name" value="DAO"/>
    <property type="match status" value="1"/>
</dbReference>
<dbReference type="Pfam" id="PF05430">
    <property type="entry name" value="Methyltransf_30"/>
    <property type="match status" value="1"/>
</dbReference>
<dbReference type="SUPFAM" id="SSF51905">
    <property type="entry name" value="FAD/NAD(P)-binding domain"/>
    <property type="match status" value="1"/>
</dbReference>
<feature type="chain" id="PRO_0000348044" description="tRNA 5-methylaminomethyl-2-thiouridine biosynthesis bifunctional protein MnmC">
    <location>
        <begin position="1"/>
        <end position="674"/>
    </location>
</feature>
<feature type="region of interest" description="tRNA (mnm(5)s(2)U34)-methyltransferase">
    <location>
        <begin position="1"/>
        <end position="248"/>
    </location>
</feature>
<feature type="region of interest" description="FAD-dependent cmnm(5)s(2)U34 oxidoreductase">
    <location>
        <begin position="276"/>
        <end position="674"/>
    </location>
</feature>
<accession>Q31JE7</accession>
<evidence type="ECO:0000255" key="1">
    <source>
        <dbReference type="HAMAP-Rule" id="MF_01102"/>
    </source>
</evidence>
<proteinExistence type="inferred from homology"/>
<comment type="function">
    <text evidence="1">Catalyzes the last two steps in the biosynthesis of 5-methylaminomethyl-2-thiouridine (mnm(5)s(2)U) at the wobble position (U34) in tRNA. Catalyzes the FAD-dependent demodification of cmnm(5)s(2)U34 to nm(5)s(2)U34, followed by the transfer of a methyl group from S-adenosyl-L-methionine to nm(5)s(2)U34, to form mnm(5)s(2)U34.</text>
</comment>
<comment type="catalytic activity">
    <reaction evidence="1">
        <text>5-aminomethyl-2-thiouridine(34) in tRNA + S-adenosyl-L-methionine = 5-methylaminomethyl-2-thiouridine(34) in tRNA + S-adenosyl-L-homocysteine + H(+)</text>
        <dbReference type="Rhea" id="RHEA:19569"/>
        <dbReference type="Rhea" id="RHEA-COMP:10195"/>
        <dbReference type="Rhea" id="RHEA-COMP:10197"/>
        <dbReference type="ChEBI" id="CHEBI:15378"/>
        <dbReference type="ChEBI" id="CHEBI:57856"/>
        <dbReference type="ChEBI" id="CHEBI:59789"/>
        <dbReference type="ChEBI" id="CHEBI:74454"/>
        <dbReference type="ChEBI" id="CHEBI:74455"/>
        <dbReference type="EC" id="2.1.1.61"/>
    </reaction>
</comment>
<comment type="cofactor">
    <cofactor evidence="1">
        <name>FAD</name>
        <dbReference type="ChEBI" id="CHEBI:57692"/>
    </cofactor>
</comment>
<comment type="subcellular location">
    <subcellularLocation>
        <location evidence="1">Cytoplasm</location>
    </subcellularLocation>
</comment>
<comment type="similarity">
    <text evidence="1">In the N-terminal section; belongs to the methyltransferase superfamily. tRNA (mnm(5)s(2)U34)-methyltransferase family.</text>
</comment>
<comment type="similarity">
    <text evidence="1">In the C-terminal section; belongs to the DAO family.</text>
</comment>
<gene>
    <name evidence="1" type="primary">mnmC</name>
    <name type="ordered locus">Tcr_0130</name>
</gene>